<protein>
    <recommendedName>
        <fullName>Sodium-coupled monocarboxylate transporter 2</fullName>
    </recommendedName>
    <alternativeName>
        <fullName>Electroneutral sodium monocarboxylate cotransporter</fullName>
    </alternativeName>
    <alternativeName>
        <fullName>Low-affinity sodium-lactate cotransporter</fullName>
    </alternativeName>
    <alternativeName>
        <fullName>Solute carrier family 5 member 12</fullName>
    </alternativeName>
</protein>
<dbReference type="EMBL" id="BC151502">
    <property type="protein sequence ID" value="AAI51503.1"/>
    <property type="molecule type" value="mRNA"/>
</dbReference>
<dbReference type="RefSeq" id="NP_001094529.1">
    <property type="nucleotide sequence ID" value="NM_001101059.2"/>
</dbReference>
<dbReference type="SMR" id="A7MBD8"/>
<dbReference type="FunCoup" id="A7MBD8">
    <property type="interactions" value="39"/>
</dbReference>
<dbReference type="STRING" id="9913.ENSBTAP00000029140"/>
<dbReference type="GlyCosmos" id="A7MBD8">
    <property type="glycosylation" value="2 sites, No reported glycans"/>
</dbReference>
<dbReference type="GlyGen" id="A7MBD8">
    <property type="glycosylation" value="2 sites"/>
</dbReference>
<dbReference type="PaxDb" id="9913-ENSBTAP00000029140"/>
<dbReference type="Ensembl" id="ENSBTAT00000029140.5">
    <property type="protein sequence ID" value="ENSBTAP00000029140.4"/>
    <property type="gene ID" value="ENSBTAG00000021858.5"/>
</dbReference>
<dbReference type="GeneID" id="507621"/>
<dbReference type="KEGG" id="bta:507621"/>
<dbReference type="CTD" id="159963"/>
<dbReference type="VEuPathDB" id="HostDB:ENSBTAG00000021858"/>
<dbReference type="VGNC" id="VGNC:34905">
    <property type="gene designation" value="SLC5A12"/>
</dbReference>
<dbReference type="eggNOG" id="KOG2349">
    <property type="taxonomic scope" value="Eukaryota"/>
</dbReference>
<dbReference type="GeneTree" id="ENSGT00940000159545"/>
<dbReference type="HOGENOM" id="CLU_018808_11_1_1"/>
<dbReference type="InParanoid" id="A7MBD8"/>
<dbReference type="OMA" id="QMVVMFV"/>
<dbReference type="OrthoDB" id="6132759at2759"/>
<dbReference type="TreeFam" id="TF316728"/>
<dbReference type="Reactome" id="R-BTA-427601">
    <property type="pathway name" value="Multifunctional anion exchangers"/>
</dbReference>
<dbReference type="Proteomes" id="UP000009136">
    <property type="component" value="Chromosome 15"/>
</dbReference>
<dbReference type="Bgee" id="ENSBTAG00000021858">
    <property type="expression patterns" value="Expressed in metanephros cortex and 32 other cell types or tissues"/>
</dbReference>
<dbReference type="GO" id="GO:0016324">
    <property type="term" value="C:apical plasma membrane"/>
    <property type="evidence" value="ECO:0000250"/>
    <property type="project" value="UniProtKB"/>
</dbReference>
<dbReference type="GO" id="GO:0005654">
    <property type="term" value="C:nucleoplasm"/>
    <property type="evidence" value="ECO:0007669"/>
    <property type="project" value="Ensembl"/>
</dbReference>
<dbReference type="GO" id="GO:0015129">
    <property type="term" value="F:lactate transmembrane transporter activity"/>
    <property type="evidence" value="ECO:0000318"/>
    <property type="project" value="GO_Central"/>
</dbReference>
<dbReference type="GO" id="GO:0140161">
    <property type="term" value="F:monocarboxylate:sodium symporter activity"/>
    <property type="evidence" value="ECO:0000250"/>
    <property type="project" value="UniProtKB"/>
</dbReference>
<dbReference type="GO" id="GO:0015293">
    <property type="term" value="F:symporter activity"/>
    <property type="evidence" value="ECO:0000318"/>
    <property type="project" value="GO_Central"/>
</dbReference>
<dbReference type="GO" id="GO:0015718">
    <property type="term" value="P:monocarboxylic acid transport"/>
    <property type="evidence" value="ECO:0000250"/>
    <property type="project" value="UniProtKB"/>
</dbReference>
<dbReference type="GO" id="GO:0006814">
    <property type="term" value="P:sodium ion transport"/>
    <property type="evidence" value="ECO:0000318"/>
    <property type="project" value="GO_Central"/>
</dbReference>
<dbReference type="CDD" id="cd11520">
    <property type="entry name" value="SLC5sbd_SMCT2"/>
    <property type="match status" value="1"/>
</dbReference>
<dbReference type="FunFam" id="1.20.1730.10:FF:000007">
    <property type="entry name" value="Sodium-coupled monocarboxylate transporter 2"/>
    <property type="match status" value="1"/>
</dbReference>
<dbReference type="Gene3D" id="1.20.1730.10">
    <property type="entry name" value="Sodium/glucose cotransporter"/>
    <property type="match status" value="1"/>
</dbReference>
<dbReference type="InterPro" id="IPR038377">
    <property type="entry name" value="Na/Glc_symporter_sf"/>
</dbReference>
<dbReference type="InterPro" id="IPR001734">
    <property type="entry name" value="Na/solute_symporter"/>
</dbReference>
<dbReference type="InterPro" id="IPR042700">
    <property type="entry name" value="SMCT2_SLC5sbd"/>
</dbReference>
<dbReference type="InterPro" id="IPR051163">
    <property type="entry name" value="Sodium:Solute_Symporter_SSF"/>
</dbReference>
<dbReference type="NCBIfam" id="TIGR00813">
    <property type="entry name" value="sss"/>
    <property type="match status" value="1"/>
</dbReference>
<dbReference type="PANTHER" id="PTHR42985">
    <property type="entry name" value="SODIUM-COUPLED MONOCARBOXYLATE TRANSPORTER"/>
    <property type="match status" value="1"/>
</dbReference>
<dbReference type="PANTHER" id="PTHR42985:SF15">
    <property type="entry name" value="SODIUM-COUPLED MONOCARBOXYLATE TRANSPORTER 2"/>
    <property type="match status" value="1"/>
</dbReference>
<dbReference type="Pfam" id="PF00474">
    <property type="entry name" value="SSF"/>
    <property type="match status" value="1"/>
</dbReference>
<dbReference type="PROSITE" id="PS50283">
    <property type="entry name" value="NA_SOLUT_SYMP_3"/>
    <property type="match status" value="1"/>
</dbReference>
<sequence>MEVKNFAVWDYVVFAALFIISSGIGVFYAIKERKKATSREFLVGGRQMSFGPVALSLTASFMSAVTVLGTPADVYRFGASFVLFFITYGLVIILTSELFLPVFYRSGITSTYEYLQLRFNKPVRYAATVIYIVQTILYTGVVVYAPALALNQVTGFDLWGSVFATGIVCTFYCTLGGLKAVVWTDAFQMVVMIVGFLTVLIQGSTYAGGLHNVLEQAENGSRLNIFDFDIDPLRRHTFWTISVGGTFTWLGIYGVNQSTIQRCISCKTEKHAKLALYFNLLGLWIILLCAVFSGLTMYAHFKDCDPWTSGIISAPDQLMPYFVMELFSTMPGLPGLFVACAFSGTLSTVAASINALATVTFEDFVKSCFPRLSDKLSTWISKGLCLLFGVICTSTAVAASLMGGVIQAALSIHGMCGGPMLGLFSLGILFPFVNWKGALAGLLTGILLSFWVAIGAFIYPAPASKTWPLPLSTDQCGLSNVTESVPPVLSSRPAIAETWYALSYLHYSTVGCLGCIAAGVIISFLTGLQKGKDIPPLLIRPVCNLFCFWSKKYKTLCWCGVQHDSGTEQENLENDSTWKQGAESVLQNGLKQESLVPGYDPKDKSYDNMALEKITHF</sequence>
<comment type="function">
    <text evidence="1">Acts as an electroneutral and low-affinity sodium (Na(+))-dependent sodium-coupled solute transporter. Catalyzes the transport across the plasma membrane of many monocarboxylates such as lactate, pyruvate, nicotinate, propionate, butyrate and beta-D-hydroxybutyrate. May be responsible for the first step of reabsorption of monocarboxylates from the lumen of the proximal tubule of the kidney and the small intestine. May play also a role in monocarboxylates transport in the retina. Mediates electroneutral uptake of lactate, with a stoichiometry of 2 Na(+) for each lactate (By similarity).</text>
</comment>
<comment type="catalytic activity">
    <reaction evidence="4">
        <text>(S)-lactate(out) + Na(+)(out) = (S)-lactate(in) + Na(+)(in)</text>
        <dbReference type="Rhea" id="RHEA:75791"/>
        <dbReference type="ChEBI" id="CHEBI:16651"/>
        <dbReference type="ChEBI" id="CHEBI:29101"/>
    </reaction>
</comment>
<comment type="catalytic activity">
    <reaction evidence="4">
        <text>nicotinate(out) + Na(+)(out) = nicotinate(in) + Na(+)(in)</text>
        <dbReference type="Rhea" id="RHEA:75795"/>
        <dbReference type="ChEBI" id="CHEBI:29101"/>
        <dbReference type="ChEBI" id="CHEBI:32544"/>
    </reaction>
</comment>
<comment type="catalytic activity">
    <reaction evidence="4">
        <text>pyruvate(out) + Na(+)(out) = pyruvate(in) + Na(+)(in)</text>
        <dbReference type="Rhea" id="RHEA:75799"/>
        <dbReference type="ChEBI" id="CHEBI:15361"/>
        <dbReference type="ChEBI" id="CHEBI:29101"/>
    </reaction>
</comment>
<comment type="catalytic activity">
    <reaction evidence="4">
        <text>propanoate(out) + Na(+)(out) = propanoate(in) + Na(+)(in)</text>
        <dbReference type="Rhea" id="RHEA:75807"/>
        <dbReference type="ChEBI" id="CHEBI:17272"/>
        <dbReference type="ChEBI" id="CHEBI:29101"/>
    </reaction>
</comment>
<comment type="catalytic activity">
    <reaction evidence="4">
        <text>butanoate(out) + Na(+)(out) = butanoate(in) + Na(+)(in)</text>
        <dbReference type="Rhea" id="RHEA:75803"/>
        <dbReference type="ChEBI" id="CHEBI:17968"/>
        <dbReference type="ChEBI" id="CHEBI:29101"/>
    </reaction>
</comment>
<comment type="catalytic activity">
    <reaction evidence="4">
        <text>acetoacetate(out) + Na(+)(out) = acetoacetate(in) + Na(+)(in)</text>
        <dbReference type="Rhea" id="RHEA:75811"/>
        <dbReference type="ChEBI" id="CHEBI:13705"/>
        <dbReference type="ChEBI" id="CHEBI:29101"/>
    </reaction>
</comment>
<comment type="subcellular location">
    <subcellularLocation>
        <location evidence="2">Apical cell membrane</location>
        <topology evidence="2">Multi-pass membrane protein</topology>
    </subcellularLocation>
    <text evidence="3">Detected at the brush border membrane of the kidney. Colocalizes with viementin in Mueller cells.</text>
</comment>
<comment type="similarity">
    <text evidence="6">Belongs to the sodium:solute symporter (SSF) (TC 2.A.21) family.</text>
</comment>
<accession>A7MBD8</accession>
<reference key="1">
    <citation type="submission" date="2007-07" db="EMBL/GenBank/DDBJ databases">
        <authorList>
            <consortium name="NIH - Mammalian Gene Collection (MGC) project"/>
        </authorList>
    </citation>
    <scope>NUCLEOTIDE SEQUENCE [LARGE SCALE MRNA]</scope>
    <source>
        <strain>Hereford</strain>
        <tissue>Kidney</tissue>
    </source>
</reference>
<feature type="chain" id="PRO_0000337679" description="Sodium-coupled monocarboxylate transporter 2">
    <location>
        <begin position="1"/>
        <end position="617"/>
    </location>
</feature>
<feature type="topological domain" description="Extracellular" evidence="5">
    <location>
        <begin position="1"/>
        <end position="5"/>
    </location>
</feature>
<feature type="transmembrane region" description="Helical" evidence="5">
    <location>
        <begin position="6"/>
        <end position="26"/>
    </location>
</feature>
<feature type="topological domain" description="Cytoplasmic" evidence="5">
    <location>
        <begin position="27"/>
        <end position="47"/>
    </location>
</feature>
<feature type="transmembrane region" description="Helical" evidence="5">
    <location>
        <begin position="48"/>
        <end position="68"/>
    </location>
</feature>
<feature type="topological domain" description="Extracellular" evidence="5">
    <location>
        <begin position="69"/>
        <end position="80"/>
    </location>
</feature>
<feature type="transmembrane region" description="Helical" evidence="5">
    <location>
        <begin position="81"/>
        <end position="101"/>
    </location>
</feature>
<feature type="topological domain" description="Cytoplasmic" evidence="5">
    <location>
        <begin position="102"/>
        <end position="128"/>
    </location>
</feature>
<feature type="transmembrane region" description="Helical" evidence="5">
    <location>
        <begin position="129"/>
        <end position="149"/>
    </location>
</feature>
<feature type="topological domain" description="Extracellular" evidence="5">
    <location>
        <begin position="150"/>
        <end position="157"/>
    </location>
</feature>
<feature type="transmembrane region" description="Helical" evidence="5">
    <location>
        <begin position="158"/>
        <end position="178"/>
    </location>
</feature>
<feature type="topological domain" description="Cytoplasmic" evidence="5">
    <location>
        <begin position="179"/>
        <end position="180"/>
    </location>
</feature>
<feature type="transmembrane region" description="Helical" evidence="5">
    <location>
        <begin position="181"/>
        <end position="201"/>
    </location>
</feature>
<feature type="topological domain" description="Extracellular" evidence="5">
    <location>
        <begin position="202"/>
        <end position="235"/>
    </location>
</feature>
<feature type="transmembrane region" description="Helical" evidence="5">
    <location>
        <begin position="236"/>
        <end position="256"/>
    </location>
</feature>
<feature type="topological domain" description="Cytoplasmic" evidence="5">
    <location>
        <begin position="257"/>
        <end position="273"/>
    </location>
</feature>
<feature type="transmembrane region" description="Helical" evidence="5">
    <location>
        <begin position="274"/>
        <end position="294"/>
    </location>
</feature>
<feature type="topological domain" description="Extracellular" evidence="5">
    <location>
        <begin position="295"/>
        <end position="334"/>
    </location>
</feature>
<feature type="transmembrane region" description="Helical" evidence="5">
    <location>
        <begin position="335"/>
        <end position="357"/>
    </location>
</feature>
<feature type="topological domain" description="Cytoplasmic" evidence="5">
    <location>
        <begin position="358"/>
        <end position="385"/>
    </location>
</feature>
<feature type="transmembrane region" description="Helical" evidence="5">
    <location>
        <begin position="386"/>
        <end position="406"/>
    </location>
</feature>
<feature type="topological domain" description="Extracellular" evidence="5">
    <location>
        <begin position="407"/>
        <end position="411"/>
    </location>
</feature>
<feature type="transmembrane region" description="Helical" evidence="5">
    <location>
        <begin position="412"/>
        <end position="432"/>
    </location>
</feature>
<feature type="topological domain" description="Cytoplasmic" evidence="5">
    <location>
        <begin position="433"/>
        <end position="437"/>
    </location>
</feature>
<feature type="transmembrane region" description="Helical" evidence="5">
    <location>
        <begin position="438"/>
        <end position="458"/>
    </location>
</feature>
<feature type="topological domain" description="Extracellular" evidence="5">
    <location>
        <begin position="459"/>
        <end position="507"/>
    </location>
</feature>
<feature type="transmembrane region" description="Helical" evidence="5">
    <location>
        <begin position="508"/>
        <end position="528"/>
    </location>
</feature>
<feature type="topological domain" description="Cytoplasmic" evidence="5">
    <location>
        <begin position="529"/>
        <end position="617"/>
    </location>
</feature>
<feature type="glycosylation site" description="N-linked (GlcNAc...) asparagine" evidence="5">
    <location>
        <position position="219"/>
    </location>
</feature>
<feature type="glycosylation site" description="N-linked (GlcNAc...) asparagine" evidence="5">
    <location>
        <position position="480"/>
    </location>
</feature>
<evidence type="ECO:0000250" key="1"/>
<evidence type="ECO:0000250" key="2">
    <source>
        <dbReference type="UniProtKB" id="Q1EHB4"/>
    </source>
</evidence>
<evidence type="ECO:0000250" key="3">
    <source>
        <dbReference type="UniProtKB" id="Q49B93"/>
    </source>
</evidence>
<evidence type="ECO:0000250" key="4">
    <source>
        <dbReference type="UniProtKB" id="Q7T384"/>
    </source>
</evidence>
<evidence type="ECO:0000255" key="5"/>
<evidence type="ECO:0000305" key="6"/>
<keyword id="KW-1003">Cell membrane</keyword>
<keyword id="KW-0325">Glycoprotein</keyword>
<keyword id="KW-0406">Ion transport</keyword>
<keyword id="KW-0472">Membrane</keyword>
<keyword id="KW-1185">Reference proteome</keyword>
<keyword id="KW-0915">Sodium</keyword>
<keyword id="KW-0739">Sodium transport</keyword>
<keyword id="KW-0769">Symport</keyword>
<keyword id="KW-0812">Transmembrane</keyword>
<keyword id="KW-1133">Transmembrane helix</keyword>
<keyword id="KW-0813">Transport</keyword>
<organism>
    <name type="scientific">Bos taurus</name>
    <name type="common">Bovine</name>
    <dbReference type="NCBI Taxonomy" id="9913"/>
    <lineage>
        <taxon>Eukaryota</taxon>
        <taxon>Metazoa</taxon>
        <taxon>Chordata</taxon>
        <taxon>Craniata</taxon>
        <taxon>Vertebrata</taxon>
        <taxon>Euteleostomi</taxon>
        <taxon>Mammalia</taxon>
        <taxon>Eutheria</taxon>
        <taxon>Laurasiatheria</taxon>
        <taxon>Artiodactyla</taxon>
        <taxon>Ruminantia</taxon>
        <taxon>Pecora</taxon>
        <taxon>Bovidae</taxon>
        <taxon>Bovinae</taxon>
        <taxon>Bos</taxon>
    </lineage>
</organism>
<proteinExistence type="evidence at transcript level"/>
<name>SC5AC_BOVIN</name>
<gene>
    <name type="primary">SLC5A12</name>
    <name type="synonym">SMCT2</name>
</gene>